<organism>
    <name type="scientific">Streptococcus pneumoniae (strain Hungary19A-6)</name>
    <dbReference type="NCBI Taxonomy" id="487214"/>
    <lineage>
        <taxon>Bacteria</taxon>
        <taxon>Bacillati</taxon>
        <taxon>Bacillota</taxon>
        <taxon>Bacilli</taxon>
        <taxon>Lactobacillales</taxon>
        <taxon>Streptococcaceae</taxon>
        <taxon>Streptococcus</taxon>
    </lineage>
</organism>
<accession>B1IAM4</accession>
<feature type="chain" id="PRO_1000090477" description="UDP-N-acetylglucosamine--N-acetylmuramyl-(pentapeptide) pyrophosphoryl-undecaprenol N-acetylglucosamine transferase">
    <location>
        <begin position="1"/>
        <end position="352"/>
    </location>
</feature>
<feature type="binding site" evidence="1">
    <location>
        <position position="195"/>
    </location>
    <ligand>
        <name>UDP-N-acetyl-alpha-D-glucosamine</name>
        <dbReference type="ChEBI" id="CHEBI:57705"/>
    </ligand>
</feature>
<feature type="binding site" evidence="1">
    <location>
        <position position="287"/>
    </location>
    <ligand>
        <name>UDP-N-acetyl-alpha-D-glucosamine</name>
        <dbReference type="ChEBI" id="CHEBI:57705"/>
    </ligand>
</feature>
<name>MURG_STRPI</name>
<protein>
    <recommendedName>
        <fullName evidence="1">UDP-N-acetylglucosamine--N-acetylmuramyl-(pentapeptide) pyrophosphoryl-undecaprenol N-acetylglucosamine transferase</fullName>
        <ecNumber evidence="1">2.4.1.227</ecNumber>
    </recommendedName>
    <alternativeName>
        <fullName evidence="1">Undecaprenyl-PP-MurNAc-pentapeptide-UDPGlcNAc GlcNAc transferase</fullName>
    </alternativeName>
</protein>
<comment type="function">
    <text evidence="1">Cell wall formation. Catalyzes the transfer of a GlcNAc subunit on undecaprenyl-pyrophosphoryl-MurNAc-pentapeptide (lipid intermediate I) to form undecaprenyl-pyrophosphoryl-MurNAc-(pentapeptide)GlcNAc (lipid intermediate II).</text>
</comment>
<comment type="catalytic activity">
    <reaction evidence="1">
        <text>Mur2Ac(oyl-L-Ala-gamma-D-Glu-L-Lys-D-Ala-D-Ala)-di-trans,octa-cis-undecaprenyl diphosphate + UDP-N-acetyl-alpha-D-glucosamine = beta-D-GlcNAc-(1-&gt;4)-Mur2Ac(oyl-L-Ala-gamma-D-Glu-L-Lys-D-Ala-D-Ala)-di-trans,octa-cis-undecaprenyl diphosphate + UDP + H(+)</text>
        <dbReference type="Rhea" id="RHEA:23192"/>
        <dbReference type="ChEBI" id="CHEBI:15378"/>
        <dbReference type="ChEBI" id="CHEBI:57705"/>
        <dbReference type="ChEBI" id="CHEBI:58223"/>
        <dbReference type="ChEBI" id="CHEBI:60032"/>
        <dbReference type="ChEBI" id="CHEBI:60033"/>
        <dbReference type="EC" id="2.4.1.227"/>
    </reaction>
</comment>
<comment type="pathway">
    <text evidence="1">Cell wall biogenesis; peptidoglycan biosynthesis.</text>
</comment>
<comment type="subcellular location">
    <subcellularLocation>
        <location evidence="1">Cell membrane</location>
        <topology evidence="1">Peripheral membrane protein</topology>
        <orientation evidence="1">Cytoplasmic side</orientation>
    </subcellularLocation>
</comment>
<comment type="similarity">
    <text evidence="1">Belongs to the glycosyltransferase 28 family. MurG subfamily.</text>
</comment>
<dbReference type="EC" id="2.4.1.227" evidence="1"/>
<dbReference type="EMBL" id="CP000936">
    <property type="protein sequence ID" value="ACA35508.1"/>
    <property type="molecule type" value="Genomic_DNA"/>
</dbReference>
<dbReference type="RefSeq" id="WP_000724830.1">
    <property type="nucleotide sequence ID" value="NC_010380.1"/>
</dbReference>
<dbReference type="SMR" id="B1IAM4"/>
<dbReference type="CAZy" id="GT28">
    <property type="family name" value="Glycosyltransferase Family 28"/>
</dbReference>
<dbReference type="KEGG" id="spv:SPH_0783"/>
<dbReference type="HOGENOM" id="CLU_037404_0_0_9"/>
<dbReference type="UniPathway" id="UPA00219"/>
<dbReference type="Proteomes" id="UP000002163">
    <property type="component" value="Chromosome"/>
</dbReference>
<dbReference type="GO" id="GO:0005886">
    <property type="term" value="C:plasma membrane"/>
    <property type="evidence" value="ECO:0007669"/>
    <property type="project" value="UniProtKB-SubCell"/>
</dbReference>
<dbReference type="GO" id="GO:0050511">
    <property type="term" value="F:undecaprenyldiphospho-muramoylpentapeptide beta-N-acetylglucosaminyltransferase activity"/>
    <property type="evidence" value="ECO:0007669"/>
    <property type="project" value="UniProtKB-UniRule"/>
</dbReference>
<dbReference type="GO" id="GO:0005975">
    <property type="term" value="P:carbohydrate metabolic process"/>
    <property type="evidence" value="ECO:0007669"/>
    <property type="project" value="InterPro"/>
</dbReference>
<dbReference type="GO" id="GO:0051301">
    <property type="term" value="P:cell division"/>
    <property type="evidence" value="ECO:0007669"/>
    <property type="project" value="UniProtKB-KW"/>
</dbReference>
<dbReference type="GO" id="GO:0071555">
    <property type="term" value="P:cell wall organization"/>
    <property type="evidence" value="ECO:0007669"/>
    <property type="project" value="UniProtKB-KW"/>
</dbReference>
<dbReference type="GO" id="GO:0030259">
    <property type="term" value="P:lipid glycosylation"/>
    <property type="evidence" value="ECO:0007669"/>
    <property type="project" value="UniProtKB-UniRule"/>
</dbReference>
<dbReference type="GO" id="GO:0009252">
    <property type="term" value="P:peptidoglycan biosynthetic process"/>
    <property type="evidence" value="ECO:0007669"/>
    <property type="project" value="UniProtKB-UniRule"/>
</dbReference>
<dbReference type="GO" id="GO:0008360">
    <property type="term" value="P:regulation of cell shape"/>
    <property type="evidence" value="ECO:0007669"/>
    <property type="project" value="UniProtKB-KW"/>
</dbReference>
<dbReference type="CDD" id="cd03785">
    <property type="entry name" value="GT28_MurG"/>
    <property type="match status" value="1"/>
</dbReference>
<dbReference type="Gene3D" id="3.40.50.2000">
    <property type="entry name" value="Glycogen Phosphorylase B"/>
    <property type="match status" value="2"/>
</dbReference>
<dbReference type="HAMAP" id="MF_00033">
    <property type="entry name" value="MurG"/>
    <property type="match status" value="1"/>
</dbReference>
<dbReference type="InterPro" id="IPR006009">
    <property type="entry name" value="GlcNAc_MurG"/>
</dbReference>
<dbReference type="InterPro" id="IPR007235">
    <property type="entry name" value="Glyco_trans_28_C"/>
</dbReference>
<dbReference type="InterPro" id="IPR004276">
    <property type="entry name" value="GlycoTrans_28_N"/>
</dbReference>
<dbReference type="PANTHER" id="PTHR21015:SF27">
    <property type="entry name" value="UDP-N-ACETYLGLUCOSAMINE--N-ACETYLMURAMYL-(PENTAPEPTIDE) PYROPHOSPHORYL-UNDECAPRENOL N-ACETYLGLUCOSAMINE TRANSFERASE"/>
    <property type="match status" value="1"/>
</dbReference>
<dbReference type="PANTHER" id="PTHR21015">
    <property type="entry name" value="UDP-N-ACETYLGLUCOSAMINE--N-ACETYLMURAMYL-(PENTAPEPTIDE) PYROPHOSPHORYL-UNDECAPRENOL N-ACETYLGLUCOSAMINE TRANSFERASE 1"/>
    <property type="match status" value="1"/>
</dbReference>
<dbReference type="Pfam" id="PF04101">
    <property type="entry name" value="Glyco_tran_28_C"/>
    <property type="match status" value="1"/>
</dbReference>
<dbReference type="Pfam" id="PF03033">
    <property type="entry name" value="Glyco_transf_28"/>
    <property type="match status" value="1"/>
</dbReference>
<dbReference type="SUPFAM" id="SSF53756">
    <property type="entry name" value="UDP-Glycosyltransferase/glycogen phosphorylase"/>
    <property type="match status" value="1"/>
</dbReference>
<proteinExistence type="inferred from homology"/>
<gene>
    <name evidence="1" type="primary">murG</name>
    <name type="ordered locus">SPH_0783</name>
</gene>
<evidence type="ECO:0000255" key="1">
    <source>
        <dbReference type="HAMAP-Rule" id="MF_00033"/>
    </source>
</evidence>
<reference key="1">
    <citation type="journal article" date="2010" name="Genome Biol.">
        <title>Structure and dynamics of the pan-genome of Streptococcus pneumoniae and closely related species.</title>
        <authorList>
            <person name="Donati C."/>
            <person name="Hiller N.L."/>
            <person name="Tettelin H."/>
            <person name="Muzzi A."/>
            <person name="Croucher N.J."/>
            <person name="Angiuoli S.V."/>
            <person name="Oggioni M."/>
            <person name="Dunning Hotopp J.C."/>
            <person name="Hu F.Z."/>
            <person name="Riley D.R."/>
            <person name="Covacci A."/>
            <person name="Mitchell T.J."/>
            <person name="Bentley S.D."/>
            <person name="Kilian M."/>
            <person name="Ehrlich G.D."/>
            <person name="Rappuoli R."/>
            <person name="Moxon E.R."/>
            <person name="Masignani V."/>
        </authorList>
    </citation>
    <scope>NUCLEOTIDE SEQUENCE [LARGE SCALE GENOMIC DNA]</scope>
    <source>
        <strain>Hungary19A-6</strain>
    </source>
</reference>
<keyword id="KW-0131">Cell cycle</keyword>
<keyword id="KW-0132">Cell division</keyword>
<keyword id="KW-1003">Cell membrane</keyword>
<keyword id="KW-0133">Cell shape</keyword>
<keyword id="KW-0961">Cell wall biogenesis/degradation</keyword>
<keyword id="KW-0328">Glycosyltransferase</keyword>
<keyword id="KW-0472">Membrane</keyword>
<keyword id="KW-0573">Peptidoglycan synthesis</keyword>
<keyword id="KW-0808">Transferase</keyword>
<sequence>MKKIVFTGGGTVGHVTLNLLLMPKFIEDGWEVHYIGDKRGIEHQEILKSGLDVTFHSIATGKLRRYFSWQNMLDVFKVGWGIVQSLFIMLRLRPQTLFSKGGFVSVPPVIAARVSGVPVFIHESDLSMGLANKIAYKFATKMYSTFEQASSLAKVEHVGAVTKVSDKNTPEPDELVDIQTHFNPKLPTVLFVGGSAGARVFNQLVTDHKKELTERYNIINLTGDSSLNELRQNLFRVDYVTDLYQPLMELADIVVTRGGANTIFELLAIAKLHVIVPLGREASRGDQIENAAYFVKKGYAEDLQESDLTLDSLEEKLSHLLSHKEDYQAKMKASKELKSLADFYQLLKKDLS</sequence>